<proteinExistence type="inferred from homology"/>
<name>QUEG_ATETH</name>
<gene>
    <name evidence="1" type="primary">queG</name>
    <name type="ordered locus">UCYN_03960</name>
</gene>
<reference key="1">
    <citation type="journal article" date="2010" name="Nature">
        <title>Metabolic streamlining in an open-ocean nitrogen-fixing cyanobacterium.</title>
        <authorList>
            <person name="Tripp H.J."/>
            <person name="Bench S.R."/>
            <person name="Turk K.A."/>
            <person name="Foster R.A."/>
            <person name="Desany B.A."/>
            <person name="Niazi F."/>
            <person name="Affourtit J.P."/>
            <person name="Zehr J.P."/>
        </authorList>
    </citation>
    <scope>NUCLEOTIDE SEQUENCE [LARGE SCALE GENOMIC DNA]</scope>
    <source>
        <strain>ALOHA</strain>
    </source>
</reference>
<feature type="chain" id="PRO_0000416091" description="Epoxyqueuosine reductase">
    <location>
        <begin position="1"/>
        <end position="305"/>
    </location>
</feature>
<feature type="domain" description="4Fe-4S ferredoxin-type" evidence="1">
    <location>
        <begin position="170"/>
        <end position="202"/>
    </location>
</feature>
<feature type="active site" description="Proton donor" evidence="1">
    <location>
        <position position="128"/>
    </location>
</feature>
<feature type="binding site" evidence="1">
    <location>
        <position position="182"/>
    </location>
    <ligand>
        <name>[4Fe-4S] cluster</name>
        <dbReference type="ChEBI" id="CHEBI:49883"/>
        <label>1</label>
    </ligand>
</feature>
<feature type="binding site" evidence="1">
    <location>
        <position position="185"/>
    </location>
    <ligand>
        <name>[4Fe-4S] cluster</name>
        <dbReference type="ChEBI" id="CHEBI:49883"/>
        <label>1</label>
    </ligand>
</feature>
<feature type="binding site" evidence="1">
    <location>
        <position position="188"/>
    </location>
    <ligand>
        <name>[4Fe-4S] cluster</name>
        <dbReference type="ChEBI" id="CHEBI:49883"/>
        <label>1</label>
    </ligand>
</feature>
<feature type="binding site" evidence="1">
    <location>
        <position position="192"/>
    </location>
    <ligand>
        <name>[4Fe-4S] cluster</name>
        <dbReference type="ChEBI" id="CHEBI:49883"/>
        <label>2</label>
    </ligand>
</feature>
<feature type="binding site" evidence="1">
    <location>
        <position position="208"/>
    </location>
    <ligand>
        <name>[4Fe-4S] cluster</name>
        <dbReference type="ChEBI" id="CHEBI:49883"/>
        <label>2</label>
    </ligand>
</feature>
<feature type="binding site" evidence="1">
    <location>
        <position position="236"/>
    </location>
    <ligand>
        <name>[4Fe-4S] cluster</name>
        <dbReference type="ChEBI" id="CHEBI:49883"/>
        <label>2</label>
    </ligand>
</feature>
<feature type="binding site" evidence="1">
    <location>
        <position position="239"/>
    </location>
    <ligand>
        <name>[4Fe-4S] cluster</name>
        <dbReference type="ChEBI" id="CHEBI:49883"/>
        <label>2</label>
    </ligand>
</feature>
<feature type="binding site" evidence="1">
    <location>
        <position position="243"/>
    </location>
    <ligand>
        <name>[4Fe-4S] cluster</name>
        <dbReference type="ChEBI" id="CHEBI:49883"/>
        <label>1</label>
    </ligand>
</feature>
<keyword id="KW-0004">4Fe-4S</keyword>
<keyword id="KW-0963">Cytoplasm</keyword>
<keyword id="KW-0408">Iron</keyword>
<keyword id="KW-0411">Iron-sulfur</keyword>
<keyword id="KW-0479">Metal-binding</keyword>
<keyword id="KW-0560">Oxidoreductase</keyword>
<keyword id="KW-0671">Queuosine biosynthesis</keyword>
<keyword id="KW-1185">Reference proteome</keyword>
<keyword id="KW-0819">tRNA processing</keyword>
<dbReference type="EC" id="1.17.99.6" evidence="1"/>
<dbReference type="EMBL" id="CP001842">
    <property type="protein sequence ID" value="ADB95133.1"/>
    <property type="molecule type" value="Genomic_DNA"/>
</dbReference>
<dbReference type="RefSeq" id="WP_012953798.1">
    <property type="nucleotide sequence ID" value="NC_013771.1"/>
</dbReference>
<dbReference type="SMR" id="D3ENT3"/>
<dbReference type="STRING" id="1453429.UCYN_03960"/>
<dbReference type="KEGG" id="cyu:UCYN_03960"/>
<dbReference type="PATRIC" id="fig|713887.8.peg.369"/>
<dbReference type="HOGENOM" id="CLU_030790_0_0_3"/>
<dbReference type="OrthoDB" id="9784571at2"/>
<dbReference type="UniPathway" id="UPA00392"/>
<dbReference type="Proteomes" id="UP000001405">
    <property type="component" value="Chromosome"/>
</dbReference>
<dbReference type="GO" id="GO:0005737">
    <property type="term" value="C:cytoplasm"/>
    <property type="evidence" value="ECO:0007669"/>
    <property type="project" value="UniProtKB-SubCell"/>
</dbReference>
<dbReference type="GO" id="GO:0051539">
    <property type="term" value="F:4 iron, 4 sulfur cluster binding"/>
    <property type="evidence" value="ECO:0007669"/>
    <property type="project" value="UniProtKB-KW"/>
</dbReference>
<dbReference type="GO" id="GO:0052693">
    <property type="term" value="F:epoxyqueuosine reductase activity"/>
    <property type="evidence" value="ECO:0007669"/>
    <property type="project" value="UniProtKB-UniRule"/>
</dbReference>
<dbReference type="GO" id="GO:0046872">
    <property type="term" value="F:metal ion binding"/>
    <property type="evidence" value="ECO:0007669"/>
    <property type="project" value="UniProtKB-KW"/>
</dbReference>
<dbReference type="GO" id="GO:0008616">
    <property type="term" value="P:queuosine biosynthetic process"/>
    <property type="evidence" value="ECO:0007669"/>
    <property type="project" value="UniProtKB-UniRule"/>
</dbReference>
<dbReference type="GO" id="GO:0006400">
    <property type="term" value="P:tRNA modification"/>
    <property type="evidence" value="ECO:0007669"/>
    <property type="project" value="UniProtKB-UniRule"/>
</dbReference>
<dbReference type="Gene3D" id="3.30.70.20">
    <property type="match status" value="1"/>
</dbReference>
<dbReference type="HAMAP" id="MF_00916">
    <property type="entry name" value="QueG"/>
    <property type="match status" value="1"/>
</dbReference>
<dbReference type="InterPro" id="IPR017896">
    <property type="entry name" value="4Fe4S_Fe-S-bd"/>
</dbReference>
<dbReference type="InterPro" id="IPR017900">
    <property type="entry name" value="4Fe4S_Fe_S_CS"/>
</dbReference>
<dbReference type="InterPro" id="IPR004453">
    <property type="entry name" value="QueG"/>
</dbReference>
<dbReference type="InterPro" id="IPR013542">
    <property type="entry name" value="QueG_DUF1730"/>
</dbReference>
<dbReference type="NCBIfam" id="TIGR00276">
    <property type="entry name" value="tRNA epoxyqueuosine(34) reductase QueG"/>
    <property type="match status" value="1"/>
</dbReference>
<dbReference type="PANTHER" id="PTHR30002">
    <property type="entry name" value="EPOXYQUEUOSINE REDUCTASE"/>
    <property type="match status" value="1"/>
</dbReference>
<dbReference type="PANTHER" id="PTHR30002:SF4">
    <property type="entry name" value="EPOXYQUEUOSINE REDUCTASE"/>
    <property type="match status" value="1"/>
</dbReference>
<dbReference type="Pfam" id="PF13484">
    <property type="entry name" value="Fer4_16"/>
    <property type="match status" value="1"/>
</dbReference>
<dbReference type="Pfam" id="PF08331">
    <property type="entry name" value="QueG_DUF1730"/>
    <property type="match status" value="1"/>
</dbReference>
<dbReference type="SUPFAM" id="SSF46548">
    <property type="entry name" value="alpha-helical ferredoxin"/>
    <property type="match status" value="1"/>
</dbReference>
<dbReference type="PROSITE" id="PS00198">
    <property type="entry name" value="4FE4S_FER_1"/>
    <property type="match status" value="1"/>
</dbReference>
<dbReference type="PROSITE" id="PS51379">
    <property type="entry name" value="4FE4S_FER_2"/>
    <property type="match status" value="1"/>
</dbReference>
<protein>
    <recommendedName>
        <fullName evidence="1">Epoxyqueuosine reductase</fullName>
        <ecNumber evidence="1">1.17.99.6</ecNumber>
    </recommendedName>
    <alternativeName>
        <fullName evidence="1">Queuosine biosynthesis protein QueG</fullName>
    </alternativeName>
</protein>
<accession>D3ENT3</accession>
<organism>
    <name type="scientific">Atelocyanobacterium thalassa (isolate ALOHA)</name>
    <dbReference type="NCBI Taxonomy" id="1453429"/>
    <lineage>
        <taxon>Bacteria</taxon>
        <taxon>Bacillati</taxon>
        <taxon>Cyanobacteriota</taxon>
        <taxon>Cyanophyceae</taxon>
        <taxon>Oscillatoriophycideae</taxon>
        <taxon>Chroococcales</taxon>
        <taxon>Aphanothecaceae</taxon>
        <taxon>Candidatus Atelocyanobacterium</taxon>
        <taxon>Candidatus Atelocyanobacterium thalassa</taxon>
    </lineage>
</organism>
<sequence>MLSITEEIKNKGRDIGFHKIGIANPHIAYQDNAVSNLQGWLSSGYQADMTWMDNPKRFDITQCMPDIQSVITVALNYYTPHQHSSNSRYGKVSRYAWGKDYHKVLSQKLKLFCKWLNNRGIKTTCYVDTGPIQEKVWAERSGVGWIAKNGNVITKEFGSWVFLGVVLTNLSLTSDTPHAKYCGTCRKCLDICPTKAIVHPFVVDSRRCIAYNTIENRSNDFPEYIKNNLNGWIAGCDLCQDVCPWNKRFSKETNIQDFYPQPGNISLDLKEISNLTEIQWQQKFSSSSLKRIKVKAWRRNAKANL</sequence>
<comment type="function">
    <text evidence="1">Catalyzes the conversion of epoxyqueuosine (oQ) to queuosine (Q), which is a hypermodified base found in the wobble positions of tRNA(Asp), tRNA(Asn), tRNA(His) and tRNA(Tyr).</text>
</comment>
<comment type="catalytic activity">
    <reaction evidence="1">
        <text>epoxyqueuosine(34) in tRNA + AH2 = queuosine(34) in tRNA + A + H2O</text>
        <dbReference type="Rhea" id="RHEA:32159"/>
        <dbReference type="Rhea" id="RHEA-COMP:18571"/>
        <dbReference type="Rhea" id="RHEA-COMP:18582"/>
        <dbReference type="ChEBI" id="CHEBI:13193"/>
        <dbReference type="ChEBI" id="CHEBI:15377"/>
        <dbReference type="ChEBI" id="CHEBI:17499"/>
        <dbReference type="ChEBI" id="CHEBI:194431"/>
        <dbReference type="ChEBI" id="CHEBI:194443"/>
        <dbReference type="EC" id="1.17.99.6"/>
    </reaction>
</comment>
<comment type="cofactor">
    <cofactor evidence="1">
        <name>cob(II)alamin</name>
        <dbReference type="ChEBI" id="CHEBI:16304"/>
    </cofactor>
</comment>
<comment type="cofactor">
    <cofactor evidence="1">
        <name>[4Fe-4S] cluster</name>
        <dbReference type="ChEBI" id="CHEBI:49883"/>
    </cofactor>
    <text evidence="1">Binds 2 [4Fe-4S] clusters per monomer.</text>
</comment>
<comment type="pathway">
    <text evidence="1">tRNA modification; tRNA-queuosine biosynthesis.</text>
</comment>
<comment type="subunit">
    <text evidence="1">Monomer.</text>
</comment>
<comment type="subcellular location">
    <subcellularLocation>
        <location evidence="1">Cytoplasm</location>
    </subcellularLocation>
</comment>
<comment type="similarity">
    <text evidence="1">Belongs to the QueG family.</text>
</comment>
<evidence type="ECO:0000255" key="1">
    <source>
        <dbReference type="HAMAP-Rule" id="MF_00916"/>
    </source>
</evidence>